<accession>Q5NVB5</accession>
<accession>Q5R496</accession>
<proteinExistence type="evidence at transcript level"/>
<evidence type="ECO:0000250" key="1"/>
<evidence type="ECO:0000250" key="2">
    <source>
        <dbReference type="UniProtKB" id="P00558"/>
    </source>
</evidence>
<evidence type="ECO:0000250" key="3">
    <source>
        <dbReference type="UniProtKB" id="P09411"/>
    </source>
</evidence>
<evidence type="ECO:0000250" key="4">
    <source>
        <dbReference type="UniProtKB" id="Q7SIB7"/>
    </source>
</evidence>
<evidence type="ECO:0000305" key="5"/>
<name>PGK1_PONAB</name>
<organism>
    <name type="scientific">Pongo abelii</name>
    <name type="common">Sumatran orangutan</name>
    <name type="synonym">Pongo pygmaeus abelii</name>
    <dbReference type="NCBI Taxonomy" id="9601"/>
    <lineage>
        <taxon>Eukaryota</taxon>
        <taxon>Metazoa</taxon>
        <taxon>Chordata</taxon>
        <taxon>Craniata</taxon>
        <taxon>Vertebrata</taxon>
        <taxon>Euteleostomi</taxon>
        <taxon>Mammalia</taxon>
        <taxon>Eutheria</taxon>
        <taxon>Euarchontoglires</taxon>
        <taxon>Primates</taxon>
        <taxon>Haplorrhini</taxon>
        <taxon>Catarrhini</taxon>
        <taxon>Hominidae</taxon>
        <taxon>Pongo</taxon>
    </lineage>
</organism>
<protein>
    <recommendedName>
        <fullName>Phosphoglycerate kinase 1</fullName>
        <ecNumber evidence="2">2.7.11.1</ecNumber>
        <ecNumber evidence="2">2.7.2.3</ecNumber>
    </recommendedName>
</protein>
<sequence length="417" mass="44587">MSLSNKLTLDKLDVKGKRVVMRVDFNVPMKNNQITNNQRIKAAVPSIKFCLDNGAKSVVLMSHLGRPDGVPMPDKYSLEPVAVELKSLLGKDVLFLKDCVGPEVEKACANPAAGSVILLENLRFHVEEEGKGKDASGNKVKAEPAKIEAFRASLSKLGDVYVNDAFGTAHRAHSSMVGVNLPQKAGGFLMKKELNYFAKALESPERPFLAILGGAKVADKIQLINNMLDKVNEMIIGGGMAFTFLKVLNNMEIGTSLFDEEGAKIVKDLMSKAEKNGVKITLPVDFVTADKFDENAKTGQATVASGIPAGWMGLDCGPESSKKYAEAVTRAKQIVWNGPVGVFEWEAFAQGTKALMDEVVKATSRGCITIIGGGDTATCCAKWNTEDKVSHVSTGGGASLELLEGKVLPGVDALSNI</sequence>
<gene>
    <name type="primary">PGK1</name>
</gene>
<reference key="1">
    <citation type="submission" date="2004-11" db="EMBL/GenBank/DDBJ databases">
        <authorList>
            <consortium name="The German cDNA consortium"/>
        </authorList>
    </citation>
    <scope>NUCLEOTIDE SEQUENCE [LARGE SCALE MRNA]</scope>
    <source>
        <tissue>Brain cortex</tissue>
    </source>
</reference>
<keyword id="KW-0007">Acetylation</keyword>
<keyword id="KW-0067">ATP-binding</keyword>
<keyword id="KW-0963">Cytoplasm</keyword>
<keyword id="KW-0324">Glycolysis</keyword>
<keyword id="KW-0379">Hydroxylation</keyword>
<keyword id="KW-0418">Kinase</keyword>
<keyword id="KW-0460">Magnesium</keyword>
<keyword id="KW-0479">Metal-binding</keyword>
<keyword id="KW-0496">Mitochondrion</keyword>
<keyword id="KW-0547">Nucleotide-binding</keyword>
<keyword id="KW-0597">Phosphoprotein</keyword>
<keyword id="KW-1185">Reference proteome</keyword>
<keyword id="KW-0808">Transferase</keyword>
<comment type="function">
    <text evidence="2">Catalyzes one of the two ATP producing reactions in the glycolytic pathway via the reversible conversion of 1,3-diphosphoglycerate to 3-phosphoglycerate. Both L- and D- forms of purine and pyrimidine nucleotides can be used as substrates, but the activity is much lower on pyrimidines. In addition to its role as a glycolytic enzyme, it seems that PGK-1 acts as a polymerase alpha cofactor protein (primer recognition protein). Acts as a protein kinase when localized to the mitochondrion where it phosphorylates pyruvate dehydrogenase kinase PDK1 to inhibit pyruvate dehydrogenase complex activity and suppress the formation of acetyl-coenzyme A from pyruvate, and consequently inhibit oxidative phosphorylation and promote glycolysis. May play a role in sperm motility.</text>
</comment>
<comment type="catalytic activity">
    <reaction evidence="2">
        <text>(2R)-3-phosphoglycerate + ATP = (2R)-3-phospho-glyceroyl phosphate + ADP</text>
        <dbReference type="Rhea" id="RHEA:14801"/>
        <dbReference type="ChEBI" id="CHEBI:30616"/>
        <dbReference type="ChEBI" id="CHEBI:57604"/>
        <dbReference type="ChEBI" id="CHEBI:58272"/>
        <dbReference type="ChEBI" id="CHEBI:456216"/>
        <dbReference type="EC" id="2.7.2.3"/>
    </reaction>
</comment>
<comment type="catalytic activity">
    <reaction evidence="2">
        <text>L-seryl-[protein] + ATP = O-phospho-L-seryl-[protein] + ADP + H(+)</text>
        <dbReference type="Rhea" id="RHEA:17989"/>
        <dbReference type="Rhea" id="RHEA-COMP:9863"/>
        <dbReference type="Rhea" id="RHEA-COMP:11604"/>
        <dbReference type="ChEBI" id="CHEBI:15378"/>
        <dbReference type="ChEBI" id="CHEBI:29999"/>
        <dbReference type="ChEBI" id="CHEBI:30616"/>
        <dbReference type="ChEBI" id="CHEBI:83421"/>
        <dbReference type="ChEBI" id="CHEBI:456216"/>
        <dbReference type="EC" id="2.7.11.1"/>
    </reaction>
</comment>
<comment type="cofactor">
    <cofactor evidence="2">
        <name>Mg(2+)</name>
        <dbReference type="ChEBI" id="CHEBI:18420"/>
    </cofactor>
</comment>
<comment type="pathway">
    <text evidence="2">Carbohydrate degradation; glycolysis; pyruvate from D-glyceraldehyde 3-phosphate: step 2/5.</text>
</comment>
<comment type="subunit">
    <text evidence="2">Monomer. Interacts with kinase MAPK1/ERK2; the interaction is direct, occurs under hypoxic conditions, and promotes its interaction with PIN1. Interacts with peptidyl-prolyl cis-trans isomerase PIN1; the interaction is direct, occurs under hypoxic conditions, and targets the protein to the mitochondrion by promoting interactions with the TOM complex. Interacts with mitochondrial circRNA mcPGK1 (via its 2nd stem-loop); the interaction is direct and targets the protein to the mitochondrion by promoting interactions with the TOM complex. Interacts with pyruvate dehydrogenase kinase PDK1; the interaction is direct, occurs under hypoxic conditions and leads to PDK1-mediated inhibition of pyruvate dehydrogenase complex activity.</text>
</comment>
<comment type="subcellular location">
    <subcellularLocation>
        <location evidence="2">Cytoplasm</location>
        <location evidence="2">Cytosol</location>
    </subcellularLocation>
    <subcellularLocation>
        <location evidence="2">Mitochondrion matrix</location>
    </subcellularLocation>
    <text evidence="2">Hypoxic conditions promote mitochondrial targeting. Targeted to the mitochondrion following phosphorylation by MAPK1/ERK2, cis-trans isomerization by PIN1, and binding to mitochondrial circRNA mcPGK1.</text>
</comment>
<comment type="PTM">
    <text evidence="2">Phosphorylated at Ser-203 by MAPK1/ERK2 under hypoxic conditions, which promotes its mitochondrial targeting.</text>
</comment>
<comment type="similarity">
    <text evidence="5">Belongs to the phosphoglycerate kinase family.</text>
</comment>
<feature type="initiator methionine" description="Removed" evidence="2">
    <location>
        <position position="1"/>
    </location>
</feature>
<feature type="chain" id="PRO_0000145839" description="Phosphoglycerate kinase 1">
    <location>
        <begin position="2"/>
        <end position="417"/>
    </location>
</feature>
<feature type="region of interest" description="Mitochondrial targeting region exposed following cis-trans isomerization by PIN1 and recognized by the TOM complex for mitochondrial translocation of the protein" evidence="2">
    <location>
        <begin position="38"/>
        <end position="43"/>
    </location>
</feature>
<feature type="binding site" evidence="2">
    <location>
        <position position="23"/>
    </location>
    <ligand>
        <name>(2R)-3-phosphoglycerate</name>
        <dbReference type="ChEBI" id="CHEBI:58272"/>
    </ligand>
</feature>
<feature type="binding site" evidence="4">
    <location>
        <position position="24"/>
    </location>
    <ligand>
        <name>(2R)-3-phosphoglycerate</name>
        <dbReference type="ChEBI" id="CHEBI:58272"/>
    </ligand>
</feature>
<feature type="binding site" evidence="2">
    <location>
        <position position="25"/>
    </location>
    <ligand>
        <name>(2R)-3-phosphoglycerate</name>
        <dbReference type="ChEBI" id="CHEBI:58272"/>
    </ligand>
</feature>
<feature type="binding site" evidence="4">
    <location>
        <position position="26"/>
    </location>
    <ligand>
        <name>(2R)-3-phosphoglycerate</name>
        <dbReference type="ChEBI" id="CHEBI:58272"/>
    </ligand>
</feature>
<feature type="binding site" evidence="2">
    <location>
        <position position="38"/>
    </location>
    <ligand>
        <name>(2R)-3-phosphoglycerate</name>
        <dbReference type="ChEBI" id="CHEBI:58272"/>
    </ligand>
</feature>
<feature type="binding site" evidence="4">
    <location>
        <position position="39"/>
    </location>
    <ligand>
        <name>(2R)-3-phosphoglycerate</name>
        <dbReference type="ChEBI" id="CHEBI:58272"/>
    </ligand>
</feature>
<feature type="binding site" evidence="2">
    <location>
        <position position="62"/>
    </location>
    <ligand>
        <name>(2R)-3-phosphoglycerate</name>
        <dbReference type="ChEBI" id="CHEBI:58272"/>
    </ligand>
</feature>
<feature type="binding site" evidence="4">
    <location>
        <position position="63"/>
    </location>
    <ligand>
        <name>(2R)-3-phosphoglycerate</name>
        <dbReference type="ChEBI" id="CHEBI:58272"/>
    </ligand>
</feature>
<feature type="binding site" evidence="2">
    <location>
        <position position="65"/>
    </location>
    <ligand>
        <name>(2R)-3-phosphoglycerate</name>
        <dbReference type="ChEBI" id="CHEBI:58272"/>
    </ligand>
</feature>
<feature type="binding site" evidence="4">
    <location>
        <position position="66"/>
    </location>
    <ligand>
        <name>(2R)-3-phosphoglycerate</name>
        <dbReference type="ChEBI" id="CHEBI:58272"/>
    </ligand>
</feature>
<feature type="binding site" evidence="2">
    <location>
        <position position="122"/>
    </location>
    <ligand>
        <name>(2R)-3-phosphoglycerate</name>
        <dbReference type="ChEBI" id="CHEBI:58272"/>
    </ligand>
</feature>
<feature type="binding site" evidence="4">
    <location>
        <position position="123"/>
    </location>
    <ligand>
        <name>(2R)-3-phosphoglycerate</name>
        <dbReference type="ChEBI" id="CHEBI:58272"/>
    </ligand>
</feature>
<feature type="binding site" evidence="2">
    <location>
        <position position="170"/>
    </location>
    <ligand>
        <name>(2R)-3-phosphoglycerate</name>
        <dbReference type="ChEBI" id="CHEBI:58272"/>
    </ligand>
</feature>
<feature type="binding site" evidence="4">
    <location>
        <position position="171"/>
    </location>
    <ligand>
        <name>(2R)-3-phosphoglycerate</name>
        <dbReference type="ChEBI" id="CHEBI:58272"/>
    </ligand>
</feature>
<feature type="binding site" evidence="2">
    <location>
        <position position="214"/>
    </location>
    <ligand>
        <name>ADP</name>
        <dbReference type="ChEBI" id="CHEBI:456216"/>
    </ligand>
</feature>
<feature type="binding site" evidence="2">
    <location>
        <position position="214"/>
    </location>
    <ligand>
        <name>CDP</name>
        <dbReference type="ChEBI" id="CHEBI:58069"/>
    </ligand>
</feature>
<feature type="binding site" evidence="4">
    <location>
        <position position="215"/>
    </location>
    <ligand>
        <name>AMP</name>
        <dbReference type="ChEBI" id="CHEBI:456215"/>
    </ligand>
</feature>
<feature type="binding site" evidence="4">
    <location>
        <position position="215"/>
    </location>
    <ligand>
        <name>ATP</name>
        <dbReference type="ChEBI" id="CHEBI:30616"/>
    </ligand>
</feature>
<feature type="binding site" evidence="2">
    <location>
        <position position="215"/>
    </location>
    <ligand>
        <name>Mg(2+)</name>
        <dbReference type="ChEBI" id="CHEBI:18420"/>
    </ligand>
</feature>
<feature type="binding site" evidence="4">
    <location>
        <position position="216"/>
    </location>
    <ligand>
        <name>AMP</name>
        <dbReference type="ChEBI" id="CHEBI:456215"/>
    </ligand>
</feature>
<feature type="binding site" evidence="2">
    <location>
        <position position="218"/>
    </location>
    <ligand>
        <name>Mg(2+)</name>
        <dbReference type="ChEBI" id="CHEBI:18420"/>
    </ligand>
</feature>
<feature type="binding site" evidence="2">
    <location>
        <position position="219"/>
    </location>
    <ligand>
        <name>CDP</name>
        <dbReference type="ChEBI" id="CHEBI:58069"/>
    </ligand>
</feature>
<feature type="binding site" evidence="2">
    <location>
        <position position="219"/>
    </location>
    <ligand>
        <name>Mg(2+)</name>
        <dbReference type="ChEBI" id="CHEBI:18420"/>
    </ligand>
</feature>
<feature type="binding site" evidence="4">
    <location>
        <position position="220"/>
    </location>
    <ligand>
        <name>AMP</name>
        <dbReference type="ChEBI" id="CHEBI:456215"/>
    </ligand>
</feature>
<feature type="binding site" evidence="4">
    <location>
        <position position="220"/>
    </location>
    <ligand>
        <name>ATP</name>
        <dbReference type="ChEBI" id="CHEBI:30616"/>
    </ligand>
</feature>
<feature type="binding site" evidence="2">
    <location>
        <position position="238"/>
    </location>
    <ligand>
        <name>ADP</name>
        <dbReference type="ChEBI" id="CHEBI:456216"/>
    </ligand>
</feature>
<feature type="binding site" evidence="2">
    <location>
        <position position="238"/>
    </location>
    <ligand>
        <name>CDP</name>
        <dbReference type="ChEBI" id="CHEBI:58069"/>
    </ligand>
</feature>
<feature type="binding site" evidence="4">
    <location>
        <position position="239"/>
    </location>
    <ligand>
        <name>AMP</name>
        <dbReference type="ChEBI" id="CHEBI:456215"/>
    </ligand>
</feature>
<feature type="binding site" evidence="4">
    <location>
        <position position="239"/>
    </location>
    <ligand>
        <name>ATP</name>
        <dbReference type="ChEBI" id="CHEBI:30616"/>
    </ligand>
</feature>
<feature type="binding site" evidence="4">
    <location>
        <position position="313"/>
    </location>
    <ligand>
        <name>AMP</name>
        <dbReference type="ChEBI" id="CHEBI:456215"/>
    </ligand>
</feature>
<feature type="binding site" evidence="4">
    <location>
        <position position="313"/>
    </location>
    <ligand>
        <name>ATP</name>
        <dbReference type="ChEBI" id="CHEBI:30616"/>
    </ligand>
</feature>
<feature type="binding site" evidence="2">
    <location>
        <position position="338"/>
    </location>
    <ligand>
        <name>CDP</name>
        <dbReference type="ChEBI" id="CHEBI:58069"/>
    </ligand>
</feature>
<feature type="binding site" evidence="2">
    <location>
        <position position="340"/>
    </location>
    <ligand>
        <name>CDP</name>
        <dbReference type="ChEBI" id="CHEBI:58069"/>
    </ligand>
</feature>
<feature type="binding site" evidence="2">
    <location>
        <position position="343"/>
    </location>
    <ligand>
        <name>ADP</name>
        <dbReference type="ChEBI" id="CHEBI:456216"/>
    </ligand>
</feature>
<feature type="binding site" evidence="2">
    <location>
        <position position="343"/>
    </location>
    <ligand>
        <name>CDP</name>
        <dbReference type="ChEBI" id="CHEBI:58069"/>
    </ligand>
</feature>
<feature type="binding site" evidence="4">
    <location>
        <position position="344"/>
    </location>
    <ligand>
        <name>AMP</name>
        <dbReference type="ChEBI" id="CHEBI:456215"/>
    </ligand>
</feature>
<feature type="binding site" evidence="4">
    <location>
        <position position="344"/>
    </location>
    <ligand>
        <name>ATP</name>
        <dbReference type="ChEBI" id="CHEBI:30616"/>
    </ligand>
</feature>
<feature type="binding site" evidence="4">
    <location>
        <position position="375"/>
    </location>
    <ligand>
        <name>ATP</name>
        <dbReference type="ChEBI" id="CHEBI:30616"/>
    </ligand>
</feature>
<feature type="binding site" evidence="4">
    <location>
        <position position="375"/>
    </location>
    <ligand>
        <name>Mg(2+)</name>
        <dbReference type="ChEBI" id="CHEBI:18420"/>
    </ligand>
</feature>
<feature type="binding site" evidence="4">
    <location>
        <position position="376"/>
    </location>
    <ligand>
        <name>ATP</name>
        <dbReference type="ChEBI" id="CHEBI:30616"/>
    </ligand>
</feature>
<feature type="modified residue" description="N-acetylserine" evidence="2">
    <location>
        <position position="2"/>
    </location>
</feature>
<feature type="modified residue" description="Phosphoserine" evidence="2">
    <location>
        <position position="2"/>
    </location>
</feature>
<feature type="modified residue" description="Phosphoserine" evidence="2">
    <location>
        <position position="4"/>
    </location>
</feature>
<feature type="modified residue" description="N6-succinyllysine" evidence="3">
    <location>
        <position position="6"/>
    </location>
</feature>
<feature type="modified residue" description="N6-acetyllysine" evidence="2">
    <location>
        <position position="11"/>
    </location>
</feature>
<feature type="modified residue" description="N6-acetyllysine; alternate" evidence="2">
    <location>
        <position position="48"/>
    </location>
</feature>
<feature type="modified residue" description="N6-succinyllysine; alternate" evidence="3">
    <location>
        <position position="48"/>
    </location>
</feature>
<feature type="modified residue" description="N6-acetyllysine" evidence="2">
    <location>
        <position position="75"/>
    </location>
</feature>
<feature type="modified residue" description="Phosphotyrosine" evidence="3">
    <location>
        <position position="76"/>
    </location>
</feature>
<feature type="modified residue" description="N6-acetyllysine" evidence="2">
    <location>
        <position position="86"/>
    </location>
</feature>
<feature type="modified residue" description="N6-acetyllysine" evidence="3">
    <location>
        <position position="91"/>
    </location>
</feature>
<feature type="modified residue" description="N6-(2-hydroxyisobutyryl)lysine; alternate" evidence="2">
    <location>
        <position position="97"/>
    </location>
</feature>
<feature type="modified residue" description="N6-acetyllysine; alternate" evidence="2">
    <location>
        <position position="97"/>
    </location>
</feature>
<feature type="modified residue" description="N6-acetyllysine; alternate" evidence="2">
    <location>
        <position position="131"/>
    </location>
</feature>
<feature type="modified residue" description="N6-malonyllysine; alternate" evidence="1">
    <location>
        <position position="131"/>
    </location>
</feature>
<feature type="modified residue" description="N6-acetyllysine" evidence="2">
    <location>
        <position position="146"/>
    </location>
</feature>
<feature type="modified residue" description="N6-succinyllysine" evidence="3">
    <location>
        <position position="191"/>
    </location>
</feature>
<feature type="modified residue" description="Phosphotyrosine" evidence="2">
    <location>
        <position position="196"/>
    </location>
</feature>
<feature type="modified residue" description="N6-acetyllysine" evidence="2">
    <location>
        <position position="199"/>
    </location>
</feature>
<feature type="modified residue" description="Phosphoserine" evidence="2">
    <location>
        <position position="203"/>
    </location>
</feature>
<feature type="modified residue" description="N6-(2-hydroxyisobutyryl)lysine" evidence="2">
    <location>
        <position position="216"/>
    </location>
</feature>
<feature type="modified residue" description="N6-(2-hydroxyisobutyryl)lysine" evidence="2">
    <location>
        <position position="220"/>
    </location>
</feature>
<feature type="modified residue" description="N6-acetyllysine" evidence="2">
    <location>
        <position position="267"/>
    </location>
</feature>
<feature type="modified residue" description="N6-acetyllysine" evidence="2">
    <location>
        <position position="291"/>
    </location>
</feature>
<feature type="modified residue" description="N6-(2-hydroxyisobutyryl)lysine" evidence="2">
    <location>
        <position position="323"/>
    </location>
</feature>
<feature type="modified residue" description="N6-acetyllysine" evidence="3">
    <location>
        <position position="361"/>
    </location>
</feature>
<feature type="sequence conflict" description="In Ref. 1; CAH93420." evidence="5" ref="1">
    <original>A</original>
    <variation>V</variation>
    <location>
        <position position="135"/>
    </location>
</feature>
<feature type="sequence conflict" description="In Ref. 1; CAI29748." evidence="5" ref="1">
    <original>V</original>
    <variation>A</variation>
    <location>
        <position position="247"/>
    </location>
</feature>
<dbReference type="EC" id="2.7.11.1" evidence="2"/>
<dbReference type="EC" id="2.7.2.3" evidence="2"/>
<dbReference type="EMBL" id="CR861360">
    <property type="protein sequence ID" value="CAH93420.1"/>
    <property type="molecule type" value="mRNA"/>
</dbReference>
<dbReference type="EMBL" id="CR926123">
    <property type="protein sequence ID" value="CAI29748.1"/>
    <property type="molecule type" value="mRNA"/>
</dbReference>
<dbReference type="RefSeq" id="NP_001127126.1">
    <property type="nucleotide sequence ID" value="NM_001133654.1"/>
</dbReference>
<dbReference type="SMR" id="Q5NVB5"/>
<dbReference type="FunCoup" id="Q5NVB5">
    <property type="interactions" value="1360"/>
</dbReference>
<dbReference type="STRING" id="9601.ENSPPYP00000022944"/>
<dbReference type="Ensembl" id="ENSPPYT00000023911.3">
    <property type="protein sequence ID" value="ENSPPYP00000022944.2"/>
    <property type="gene ID" value="ENSPPYG00000020496.3"/>
</dbReference>
<dbReference type="GeneID" id="100174172"/>
<dbReference type="KEGG" id="pon:100174172"/>
<dbReference type="CTD" id="5230"/>
<dbReference type="eggNOG" id="KOG1367">
    <property type="taxonomic scope" value="Eukaryota"/>
</dbReference>
<dbReference type="GeneTree" id="ENSGT00390000008820"/>
<dbReference type="HOGENOM" id="CLU_025427_0_0_1"/>
<dbReference type="InParanoid" id="Q5NVB5"/>
<dbReference type="OMA" id="DMIFDIG"/>
<dbReference type="OrthoDB" id="275353at2759"/>
<dbReference type="TreeFam" id="TF300489"/>
<dbReference type="UniPathway" id="UPA00109">
    <property type="reaction ID" value="UER00185"/>
</dbReference>
<dbReference type="Proteomes" id="UP000001595">
    <property type="component" value="Chromosome X"/>
</dbReference>
<dbReference type="GO" id="GO:0005829">
    <property type="term" value="C:cytosol"/>
    <property type="evidence" value="ECO:0000250"/>
    <property type="project" value="UniProtKB"/>
</dbReference>
<dbReference type="GO" id="GO:0005615">
    <property type="term" value="C:extracellular space"/>
    <property type="evidence" value="ECO:0007669"/>
    <property type="project" value="Ensembl"/>
</dbReference>
<dbReference type="GO" id="GO:0045121">
    <property type="term" value="C:membrane raft"/>
    <property type="evidence" value="ECO:0007669"/>
    <property type="project" value="Ensembl"/>
</dbReference>
<dbReference type="GO" id="GO:0005759">
    <property type="term" value="C:mitochondrial matrix"/>
    <property type="evidence" value="ECO:0000250"/>
    <property type="project" value="UniProtKB"/>
</dbReference>
<dbReference type="GO" id="GO:0043531">
    <property type="term" value="F:ADP binding"/>
    <property type="evidence" value="ECO:0007669"/>
    <property type="project" value="TreeGrafter"/>
</dbReference>
<dbReference type="GO" id="GO:0005524">
    <property type="term" value="F:ATP binding"/>
    <property type="evidence" value="ECO:0007669"/>
    <property type="project" value="UniProtKB-KW"/>
</dbReference>
<dbReference type="GO" id="GO:0046872">
    <property type="term" value="F:metal ion binding"/>
    <property type="evidence" value="ECO:0007669"/>
    <property type="project" value="UniProtKB-KW"/>
</dbReference>
<dbReference type="GO" id="GO:0004618">
    <property type="term" value="F:phosphoglycerate kinase activity"/>
    <property type="evidence" value="ECO:0007669"/>
    <property type="project" value="UniProtKB-EC"/>
</dbReference>
<dbReference type="GO" id="GO:0106310">
    <property type="term" value="F:protein serine kinase activity"/>
    <property type="evidence" value="ECO:0007669"/>
    <property type="project" value="RHEA"/>
</dbReference>
<dbReference type="GO" id="GO:0004674">
    <property type="term" value="F:protein serine/threonine kinase activity"/>
    <property type="evidence" value="ECO:0007669"/>
    <property type="project" value="Ensembl"/>
</dbReference>
<dbReference type="GO" id="GO:0047134">
    <property type="term" value="F:protein-disulfide reductase [NAD(P)H] activity"/>
    <property type="evidence" value="ECO:0007669"/>
    <property type="project" value="Ensembl"/>
</dbReference>
<dbReference type="GO" id="GO:0044325">
    <property type="term" value="F:transmembrane transporter binding"/>
    <property type="evidence" value="ECO:0007669"/>
    <property type="project" value="Ensembl"/>
</dbReference>
<dbReference type="GO" id="GO:0061621">
    <property type="term" value="P:canonical glycolysis"/>
    <property type="evidence" value="ECO:0007669"/>
    <property type="project" value="Ensembl"/>
</dbReference>
<dbReference type="GO" id="GO:0071456">
    <property type="term" value="P:cellular response to hypoxia"/>
    <property type="evidence" value="ECO:0007669"/>
    <property type="project" value="Ensembl"/>
</dbReference>
<dbReference type="GO" id="GO:0030855">
    <property type="term" value="P:epithelial cell differentiation"/>
    <property type="evidence" value="ECO:0007669"/>
    <property type="project" value="Ensembl"/>
</dbReference>
<dbReference type="GO" id="GO:0006094">
    <property type="term" value="P:gluconeogenesis"/>
    <property type="evidence" value="ECO:0007669"/>
    <property type="project" value="Ensembl"/>
</dbReference>
<dbReference type="GO" id="GO:0160218">
    <property type="term" value="P:negative regulation of acetyl-CoA biosynthetic process from pyruvate"/>
    <property type="evidence" value="ECO:0007669"/>
    <property type="project" value="Ensembl"/>
</dbReference>
<dbReference type="GO" id="GO:0016525">
    <property type="term" value="P:negative regulation of angiogenesis"/>
    <property type="evidence" value="ECO:0007669"/>
    <property type="project" value="Ensembl"/>
</dbReference>
<dbReference type="GO" id="GO:0031639">
    <property type="term" value="P:plasminogen activation"/>
    <property type="evidence" value="ECO:0007669"/>
    <property type="project" value="Ensembl"/>
</dbReference>
<dbReference type="CDD" id="cd00318">
    <property type="entry name" value="Phosphoglycerate_kinase"/>
    <property type="match status" value="1"/>
</dbReference>
<dbReference type="FunFam" id="3.40.50.1260:FF:000019">
    <property type="entry name" value="Phosphoglycerate kinase 1"/>
    <property type="match status" value="1"/>
</dbReference>
<dbReference type="FunFam" id="3.40.50.1260:FF:000031">
    <property type="entry name" value="Phosphoglycerate kinase 1"/>
    <property type="match status" value="1"/>
</dbReference>
<dbReference type="Gene3D" id="3.40.50.1260">
    <property type="entry name" value="Phosphoglycerate kinase, N-terminal domain"/>
    <property type="match status" value="3"/>
</dbReference>
<dbReference type="HAMAP" id="MF_00145">
    <property type="entry name" value="Phosphoglyc_kinase"/>
    <property type="match status" value="1"/>
</dbReference>
<dbReference type="InterPro" id="IPR001576">
    <property type="entry name" value="Phosphoglycerate_kinase"/>
</dbReference>
<dbReference type="InterPro" id="IPR015911">
    <property type="entry name" value="Phosphoglycerate_kinase_CS"/>
</dbReference>
<dbReference type="InterPro" id="IPR015824">
    <property type="entry name" value="Phosphoglycerate_kinase_N"/>
</dbReference>
<dbReference type="InterPro" id="IPR036043">
    <property type="entry name" value="Phosphoglycerate_kinase_sf"/>
</dbReference>
<dbReference type="PANTHER" id="PTHR11406">
    <property type="entry name" value="PHOSPHOGLYCERATE KINASE"/>
    <property type="match status" value="1"/>
</dbReference>
<dbReference type="PANTHER" id="PTHR11406:SF14">
    <property type="entry name" value="PHOSPHOGLYCERATE KINASE 1"/>
    <property type="match status" value="1"/>
</dbReference>
<dbReference type="Pfam" id="PF00162">
    <property type="entry name" value="PGK"/>
    <property type="match status" value="1"/>
</dbReference>
<dbReference type="PIRSF" id="PIRSF000724">
    <property type="entry name" value="Pgk"/>
    <property type="match status" value="1"/>
</dbReference>
<dbReference type="PRINTS" id="PR00477">
    <property type="entry name" value="PHGLYCKINASE"/>
</dbReference>
<dbReference type="SUPFAM" id="SSF53748">
    <property type="entry name" value="Phosphoglycerate kinase"/>
    <property type="match status" value="1"/>
</dbReference>
<dbReference type="PROSITE" id="PS00111">
    <property type="entry name" value="PGLYCERATE_KINASE"/>
    <property type="match status" value="1"/>
</dbReference>